<evidence type="ECO:0000250" key="1"/>
<evidence type="ECO:0000255" key="2">
    <source>
        <dbReference type="PROSITE-ProRule" id="PRU10035"/>
    </source>
</evidence>
<evidence type="ECO:0000255" key="3">
    <source>
        <dbReference type="PROSITE-ProRule" id="PRU10036"/>
    </source>
</evidence>
<evidence type="ECO:0000269" key="4">
    <source>
    </source>
</evidence>
<evidence type="ECO:0000305" key="5"/>
<protein>
    <recommendedName>
        <fullName>Basic phospholipase A2 acanthin-2</fullName>
        <shortName>svPLA2</shortName>
        <ecNumber>3.1.1.4</ecNumber>
    </recommendedName>
    <alternativeName>
        <fullName>Acanthin II</fullName>
    </alternativeName>
    <alternativeName>
        <fullName>Phosphatidylcholine 2-acylhydrolase</fullName>
    </alternativeName>
</protein>
<comment type="function">
    <text evidence="4">Snake venom phospholipase A2 (PLA2) that potently inhibits ADP-(IC(50)=12 nM) and collagen-induced (IC(50)=4 nM) platelet aggregation when tested on human whole blood. PLA2 catalyzes the calcium-dependent hydrolysis of the 2-acyl groups in 3-sn-phosphoglycerides.</text>
</comment>
<comment type="catalytic activity">
    <reaction evidence="2 3">
        <text>a 1,2-diacyl-sn-glycero-3-phosphocholine + H2O = a 1-acyl-sn-glycero-3-phosphocholine + a fatty acid + H(+)</text>
        <dbReference type="Rhea" id="RHEA:15801"/>
        <dbReference type="ChEBI" id="CHEBI:15377"/>
        <dbReference type="ChEBI" id="CHEBI:15378"/>
        <dbReference type="ChEBI" id="CHEBI:28868"/>
        <dbReference type="ChEBI" id="CHEBI:57643"/>
        <dbReference type="ChEBI" id="CHEBI:58168"/>
        <dbReference type="EC" id="3.1.1.4"/>
    </reaction>
</comment>
<comment type="cofactor">
    <cofactor evidence="1">
        <name>Ca(2+)</name>
        <dbReference type="ChEBI" id="CHEBI:29108"/>
    </cofactor>
    <text evidence="1">Binds 1 Ca(2+) ion.</text>
</comment>
<comment type="subcellular location">
    <subcellularLocation>
        <location>Secreted</location>
    </subcellularLocation>
</comment>
<comment type="tissue specificity">
    <text>Expressed by the venom gland.</text>
</comment>
<comment type="mass spectrometry" mass="12895.63" method="Electrospray" evidence="4"/>
<comment type="similarity">
    <text evidence="5">Belongs to the phospholipase A2 family. Group I subfamily. D49 sub-subfamily.</text>
</comment>
<proteinExistence type="evidence at protein level"/>
<organism>
    <name type="scientific">Acanthophis antarcticus</name>
    <name type="common">Common death adder</name>
    <dbReference type="NCBI Taxonomy" id="8605"/>
    <lineage>
        <taxon>Eukaryota</taxon>
        <taxon>Metazoa</taxon>
        <taxon>Chordata</taxon>
        <taxon>Craniata</taxon>
        <taxon>Vertebrata</taxon>
        <taxon>Euteleostomi</taxon>
        <taxon>Lepidosauria</taxon>
        <taxon>Squamata</taxon>
        <taxon>Bifurcata</taxon>
        <taxon>Unidentata</taxon>
        <taxon>Episquamata</taxon>
        <taxon>Toxicofera</taxon>
        <taxon>Serpentes</taxon>
        <taxon>Colubroidea</taxon>
        <taxon>Elapidae</taxon>
        <taxon>Hydrophiinae</taxon>
        <taxon>Acanthophis</taxon>
    </lineage>
</organism>
<sequence length="118" mass="12884">NLYQFGGMIQCANKGARSWLSYVNYGCYCGWGGSGTPVDELDRCCQIHDNCYGEAEKKRCGPKMTLYSWECANDVPVCNSKSACEGFVCDCDAAAAKCFAKAPYNKNNIGIGSKTRCQ</sequence>
<keyword id="KW-0106">Calcium</keyword>
<keyword id="KW-0903">Direct protein sequencing</keyword>
<keyword id="KW-1015">Disulfide bond</keyword>
<keyword id="KW-1199">Hemostasis impairing toxin</keyword>
<keyword id="KW-0378">Hydrolase</keyword>
<keyword id="KW-0442">Lipid degradation</keyword>
<keyword id="KW-0443">Lipid metabolism</keyword>
<keyword id="KW-0479">Metal-binding</keyword>
<keyword id="KW-1201">Platelet aggregation inhibiting toxin</keyword>
<keyword id="KW-0964">Secreted</keyword>
<keyword id="KW-0800">Toxin</keyword>
<reference key="1">
    <citation type="journal article" date="1998" name="Arch. Biochem. Biophys.">
        <title>Purification, characterization, and amino acid sequence determination of acanthins, potent inhibitors of platelet aggregation from Acanthophis antarcticus (common death adder) venom.</title>
        <authorList>
            <person name="Chow G."/>
            <person name="Subburaju S."/>
            <person name="Kini R.M."/>
        </authorList>
    </citation>
    <scope>PROTEIN SEQUENCE</scope>
    <scope>FUNCTION</scope>
    <scope>MASS SPECTROMETRY</scope>
    <source>
        <tissue>Venom</tissue>
    </source>
</reference>
<accession>P81237</accession>
<feature type="chain" id="PRO_0000161592" description="Basic phospholipase A2 acanthin-2">
    <location>
        <begin position="1"/>
        <end position="118"/>
    </location>
</feature>
<feature type="active site" evidence="1">
    <location>
        <position position="48"/>
    </location>
</feature>
<feature type="active site" evidence="1">
    <location>
        <position position="92"/>
    </location>
</feature>
<feature type="binding site" evidence="1">
    <location>
        <position position="28"/>
    </location>
    <ligand>
        <name>Ca(2+)</name>
        <dbReference type="ChEBI" id="CHEBI:29108"/>
    </ligand>
</feature>
<feature type="binding site" evidence="1">
    <location>
        <position position="30"/>
    </location>
    <ligand>
        <name>Ca(2+)</name>
        <dbReference type="ChEBI" id="CHEBI:29108"/>
    </ligand>
</feature>
<feature type="binding site" evidence="1">
    <location>
        <position position="32"/>
    </location>
    <ligand>
        <name>Ca(2+)</name>
        <dbReference type="ChEBI" id="CHEBI:29108"/>
    </ligand>
</feature>
<feature type="binding site" evidence="1">
    <location>
        <position position="49"/>
    </location>
    <ligand>
        <name>Ca(2+)</name>
        <dbReference type="ChEBI" id="CHEBI:29108"/>
    </ligand>
</feature>
<feature type="disulfide bond" evidence="1">
    <location>
        <begin position="11"/>
        <end position="71"/>
    </location>
</feature>
<feature type="disulfide bond" evidence="1">
    <location>
        <begin position="27"/>
        <end position="117"/>
    </location>
</feature>
<feature type="disulfide bond" evidence="1">
    <location>
        <begin position="29"/>
        <end position="45"/>
    </location>
</feature>
<feature type="disulfide bond" evidence="1">
    <location>
        <begin position="44"/>
        <end position="98"/>
    </location>
</feature>
<feature type="disulfide bond" evidence="1">
    <location>
        <begin position="51"/>
        <end position="91"/>
    </location>
</feature>
<feature type="disulfide bond" evidence="1">
    <location>
        <begin position="60"/>
        <end position="84"/>
    </location>
</feature>
<feature type="disulfide bond" evidence="1">
    <location>
        <begin position="78"/>
        <end position="89"/>
    </location>
</feature>
<dbReference type="EC" id="3.1.1.4"/>
<dbReference type="SMR" id="P81237"/>
<dbReference type="GO" id="GO:0005576">
    <property type="term" value="C:extracellular region"/>
    <property type="evidence" value="ECO:0007669"/>
    <property type="project" value="UniProtKB-SubCell"/>
</dbReference>
<dbReference type="GO" id="GO:0005509">
    <property type="term" value="F:calcium ion binding"/>
    <property type="evidence" value="ECO:0007669"/>
    <property type="project" value="InterPro"/>
</dbReference>
<dbReference type="GO" id="GO:0004623">
    <property type="term" value="F:phospholipase A2 activity"/>
    <property type="evidence" value="ECO:0007669"/>
    <property type="project" value="UniProtKB-EC"/>
</dbReference>
<dbReference type="GO" id="GO:0090729">
    <property type="term" value="F:toxin activity"/>
    <property type="evidence" value="ECO:0007669"/>
    <property type="project" value="UniProtKB-KW"/>
</dbReference>
<dbReference type="GO" id="GO:0050482">
    <property type="term" value="P:arachidonate secretion"/>
    <property type="evidence" value="ECO:0007669"/>
    <property type="project" value="InterPro"/>
</dbReference>
<dbReference type="GO" id="GO:0016042">
    <property type="term" value="P:lipid catabolic process"/>
    <property type="evidence" value="ECO:0007669"/>
    <property type="project" value="UniProtKB-KW"/>
</dbReference>
<dbReference type="GO" id="GO:0006644">
    <property type="term" value="P:phospholipid metabolic process"/>
    <property type="evidence" value="ECO:0007669"/>
    <property type="project" value="InterPro"/>
</dbReference>
<dbReference type="CDD" id="cd00125">
    <property type="entry name" value="PLA2c"/>
    <property type="match status" value="1"/>
</dbReference>
<dbReference type="FunFam" id="1.20.90.10:FF:000007">
    <property type="entry name" value="Acidic phospholipase A2"/>
    <property type="match status" value="1"/>
</dbReference>
<dbReference type="Gene3D" id="1.20.90.10">
    <property type="entry name" value="Phospholipase A2 domain"/>
    <property type="match status" value="1"/>
</dbReference>
<dbReference type="InterPro" id="IPR001211">
    <property type="entry name" value="PLipase_A2"/>
</dbReference>
<dbReference type="InterPro" id="IPR033112">
    <property type="entry name" value="PLipase_A2_Asp_AS"/>
</dbReference>
<dbReference type="InterPro" id="IPR016090">
    <property type="entry name" value="PLipase_A2_dom"/>
</dbReference>
<dbReference type="InterPro" id="IPR036444">
    <property type="entry name" value="PLipase_A2_dom_sf"/>
</dbReference>
<dbReference type="InterPro" id="IPR033113">
    <property type="entry name" value="PLipase_A2_His_AS"/>
</dbReference>
<dbReference type="PANTHER" id="PTHR11716">
    <property type="entry name" value="PHOSPHOLIPASE A2 FAMILY MEMBER"/>
    <property type="match status" value="1"/>
</dbReference>
<dbReference type="PANTHER" id="PTHR11716:SF47">
    <property type="entry name" value="PHOSPHOLIPASE A2-ALPHA"/>
    <property type="match status" value="1"/>
</dbReference>
<dbReference type="Pfam" id="PF00068">
    <property type="entry name" value="Phospholip_A2_1"/>
    <property type="match status" value="1"/>
</dbReference>
<dbReference type="PRINTS" id="PR00389">
    <property type="entry name" value="PHPHLIPASEA2"/>
</dbReference>
<dbReference type="SMART" id="SM00085">
    <property type="entry name" value="PA2c"/>
    <property type="match status" value="1"/>
</dbReference>
<dbReference type="SUPFAM" id="SSF48619">
    <property type="entry name" value="Phospholipase A2, PLA2"/>
    <property type="match status" value="1"/>
</dbReference>
<dbReference type="PROSITE" id="PS00119">
    <property type="entry name" value="PA2_ASP"/>
    <property type="match status" value="1"/>
</dbReference>
<dbReference type="PROSITE" id="PS00118">
    <property type="entry name" value="PA2_HIS"/>
    <property type="match status" value="1"/>
</dbReference>
<name>PA2B2_ACAAN</name>